<proteinExistence type="evidence at protein level"/>
<accession>P97523</accession>
<accession>P97579</accession>
<accession>Q63119</accession>
<accession>Q63964</accession>
<reference key="1">
    <citation type="journal article" date="1997" name="Mamm. Genome">
        <title>Chromosomal localization of rat hepatocyte growth factor (Hgf) and HGF receptor (Met) and characterization of HGF receptor cDNA.</title>
        <authorList>
            <person name="Wallenius V.R."/>
            <person name="Rawet H."/>
            <person name="Skrtic S."/>
            <person name="Helou K."/>
            <person name="Qiu Y."/>
            <person name="Levan G."/>
            <person name="Ekberg S."/>
            <person name="Carlsson B."/>
            <person name="Isaksson O.G.P."/>
            <person name="Nakamura T."/>
            <person name="Jansson J.-O."/>
        </authorList>
    </citation>
    <scope>NUCLEOTIDE SEQUENCE [MRNA]</scope>
    <source>
        <strain>Sprague-Dawley</strain>
        <tissue>Liver</tissue>
    </source>
</reference>
<reference key="2">
    <citation type="journal article" date="1996" name="Am. J. Physiol.">
        <title>Primary structure of rat HGF receptor and induced expression in glomerular mesangial cells.</title>
        <authorList>
            <person name="Liu Y."/>
            <person name="Tolbert E.M."/>
            <person name="Sun A.M."/>
            <person name="Dworkin L.D."/>
        </authorList>
    </citation>
    <scope>NUCLEOTIDE SEQUENCE [MRNA]</scope>
    <scope>CHARACTERIZATION</scope>
    <source>
        <strain>Sprague-Dawley</strain>
        <tissue>Kidney</tissue>
    </source>
</reference>
<reference key="3">
    <citation type="journal article" date="1994" name="Biochem. Biophys. Res. Commun.">
        <title>Increased expression of c-met messenger RNA following acute gastric injury in rats.</title>
        <authorList>
            <person name="Tsujii M."/>
            <person name="Kawano S."/>
            <person name="Tsuji S."/>
            <person name="Ito T."/>
            <person name="Hayashi N."/>
            <person name="Horimoto M."/>
            <person name="Mita E."/>
            <person name="Nagano K."/>
            <person name="Masuda E."/>
            <person name="Hayashi N."/>
            <person name="Fusamoto H."/>
            <person name="Kamada T."/>
        </authorList>
    </citation>
    <scope>NUCLEOTIDE SEQUENCE [MRNA] OF 364-495</scope>
    <source>
        <strain>Sprague-Dawley</strain>
        <tissue>Gastric mucosa</tissue>
    </source>
</reference>
<reference key="4">
    <citation type="journal article" date="1995" name="Exp. Cell Res.">
        <title>Modulation of hepatocyte growth factor and c-met in the rat mammary gland during pregnancy, lactation, and involution.</title>
        <authorList>
            <person name="Pepper M.S."/>
            <person name="Soriano J.V."/>
            <person name="Menoud P.-A."/>
            <person name="Sappino A.-P."/>
            <person name="Orci L."/>
            <person name="Montesano R."/>
        </authorList>
    </citation>
    <scope>NUCLEOTIDE SEQUENCE [MRNA] OF 851-1002</scope>
    <source>
        <tissue>Intestine</tissue>
    </source>
</reference>
<reference key="5">
    <citation type="submission" date="1998-03" db="EMBL/GenBank/DDBJ databases">
        <authorList>
            <person name="Kikuchi Y."/>
        </authorList>
    </citation>
    <scope>NUCLEOTIDE SEQUENCE [GENOMIC DNA] OF 1129-1267</scope>
</reference>
<keyword id="KW-0067">ATP-binding</keyword>
<keyword id="KW-1015">Disulfide bond</keyword>
<keyword id="KW-0325">Glycoprotein</keyword>
<keyword id="KW-0418">Kinase</keyword>
<keyword id="KW-0472">Membrane</keyword>
<keyword id="KW-0547">Nucleotide-binding</keyword>
<keyword id="KW-0597">Phosphoprotein</keyword>
<keyword id="KW-0656">Proto-oncogene</keyword>
<keyword id="KW-0675">Receptor</keyword>
<keyword id="KW-1185">Reference proteome</keyword>
<keyword id="KW-0677">Repeat</keyword>
<keyword id="KW-0732">Signal</keyword>
<keyword id="KW-0808">Transferase</keyword>
<keyword id="KW-0812">Transmembrane</keyword>
<keyword id="KW-1133">Transmembrane helix</keyword>
<keyword id="KW-0829">Tyrosine-protein kinase</keyword>
<keyword id="KW-0832">Ubl conjugation</keyword>
<comment type="function">
    <text evidence="1">Receptor tyrosine kinase that transduces signals from the extracellular matrix into the cytoplasm by binding to hepatocyte growth factor/HGF ligand. Regulates many physiological processes including proliferation, scattering, morphogenesis and survival. Ligand binding at the cell surface induces autophosphorylation of MET on its intracellular domain that provides docking sites for downstream signaling molecules. Following activation by ligand, interacts with the PI3-kinase subunit PIK3R1, PLCG1, SRC, GRB2, STAT3 or the adapter GAB1. Recruitment of these downstream effectors by MET leads to the activation of several signaling cascades including the RAS-ERK, PI3 kinase-AKT, or PLCgamma-PKC. The RAS-ERK activation is associated with the morphogenetic effects while PI3K/AKT coordinates prosurvival effects. During embryonic development, MET signaling plays a role in gastrulation, development and migration of muscles and neuronal precursors, angiogenesis and kidney formation. In adults, participates in wound healing as well as organ regeneration and tissue remodeling. Also promotes differentiation and proliferation of hematopoietic cells (By similarity).</text>
</comment>
<comment type="catalytic activity">
    <reaction evidence="7">
        <text>L-tyrosyl-[protein] + ATP = O-phospho-L-tyrosyl-[protein] + ADP + H(+)</text>
        <dbReference type="Rhea" id="RHEA:10596"/>
        <dbReference type="Rhea" id="RHEA-COMP:10136"/>
        <dbReference type="Rhea" id="RHEA-COMP:20101"/>
        <dbReference type="ChEBI" id="CHEBI:15378"/>
        <dbReference type="ChEBI" id="CHEBI:30616"/>
        <dbReference type="ChEBI" id="CHEBI:46858"/>
        <dbReference type="ChEBI" id="CHEBI:61978"/>
        <dbReference type="ChEBI" id="CHEBI:456216"/>
        <dbReference type="EC" id="2.7.10.1"/>
    </reaction>
</comment>
<comment type="activity regulation">
    <text evidence="1">In its inactive state, the C-terminal tail interacts with the catalytic domain and inhibits the kinase activity. Upon ligand binding, the C-terminal tail is displaced and becomes phosphorylated, thus increasing the kinase activity (By similarity).</text>
</comment>
<comment type="subunit">
    <text evidence="2 3">Heterodimer made of an alpha chain (50 kDa) and a beta chain (145 kDa) which are disulfide linked. Binds PLXNB1. Interacts when phosphorylated with downstream effectors including STAT3, PIK3R1, SRC, PCLG1, GRB2 and GAB1. Interacts with SPSB1, SPSB2 and SPSB4. Interacts with INPP5D/SHIP1. When phosphorylated at Tyr-1357, interacts with INPPL1/SHIP2. Interacts with RANBP9 and RANBP10, as well as SPSB1, SPSB2, SPSB3 and SPSB4. SPSB1 binding occurs in the presence and in the absence of HGF, however HGF treatment has a positive effect on this interaction. Interacts with MUC20; prevents interaction with GRB2 and suppresses hepatocyte growth factor-induced cell proliferation. Interacts with GRB10. Interacts with PTPN1 and PTPN2. Interacts with HSP90AA1 and HSP90AB1; the interaction suppresses MET kinase activity. Interacts with tensin TNS3 (By similarity). Interacts (when phosphorylated) with tensin TNS4 (via SH2 domain); the interaction increases MET protein stability by inhibiting MET endocytosis and subsequent lysosomal degradation (By similarity).</text>
</comment>
<comment type="subcellular location">
    <subcellularLocation>
        <location>Membrane</location>
        <topology>Single-pass type I membrane protein</topology>
    </subcellularLocation>
</comment>
<comment type="tissue specificity">
    <text>Expressed at highest levels in lung, liver and kidney, also expressed in stomach, intestine, spleen, testis and brain. Not expressed in heart or muscle.</text>
</comment>
<comment type="developmental stage">
    <text>Expression is down-regulated during pregnancy and is virtually undetectable during lactation. Expression progressively increases post-lactation.</text>
</comment>
<comment type="induction">
    <text>By interleukin-6 and acute acid-induced gastric injury. Inhibited by prolactin.</text>
</comment>
<comment type="domain">
    <text evidence="1">The kinase domain is involved in SPSB1 binding.</text>
</comment>
<comment type="domain">
    <text evidence="1">The beta-propeller Sema domain mediates binding to HGF.</text>
</comment>
<comment type="PTM">
    <text evidence="2">Autophosphorylated in response to ligand binding on Tyr-1235 and Tyr-1236 in the kinase domain leading to further phosphorylation of Tyr-1350 and Tyr-1357 in the C-terminal multifunctional docking site. Dephosphorylated by PTPRJ at Tyr-1350 and Tyr-1366. Dephosphorylated by PTPN1 and PTPN2 (By similarity).</text>
</comment>
<comment type="PTM">
    <text evidence="2">Ubiquitinated. Ubiquitination by CBL regulates the receptor stability and activity through proteasomal degradation (By similarity).</text>
</comment>
<comment type="PTM">
    <text evidence="2">O-mannosylation of IPT/TIG domains by TMEM260 is required for protein maturation. O-mannosylated residues are composed of single mannose glycans that are not elongated or modified.</text>
</comment>
<comment type="similarity">
    <text evidence="5">Belongs to the protein kinase superfamily. Tyr protein kinase family.</text>
</comment>
<sequence length="1382" mass="153941">MKAPTALAPGILLLLLTLAQRSHGECKEALVKSEMNVNMKYQLPNFTAETPIHNVVLPGHHIYLGATNYIYVLNDKDLQKVSEFKTGPVVEHPDCFPCQDCSSKANVSGGVWKDNVNMALLVDTYYDDQLISCGSVNRGTCQRHVLPPDNAADIQSEVHCMFSPLAEEESGQCPDCVVSALGAKVLLSEKDRFINFFVGNTINSSYPPDYSLHSISVRRLKETQDGFKFLTDQSYIDVLPEFRDSYPIKYIHAFESNHFIYFLTVQKETLDAQTFHTRIIRFCSVDSGLHSYMEMPLECILTEKRRKRSTREEVFNILQAAYVSKPGANLAKQIGASPYDDILYGVFAQSKPDSAEPMNRSAVCAFPIKYVNDFFNKIVNKNNVRCLQHFYGPNHEHCFNRTLLRNSSGCEVRSDEYRTEFTTALQRVDLFMGRLNHVLLTSISTFIKGDLTIANLGTSEGRFMQVVLSRTAHFTPHVNFLLDSYPVSPEVIVEHPSNQNGYTLVVTGKKITKIPLNGLGCGHFQSCSQCLSPPYFIQCGWCHNRCVHSNECPSGTWTQEICLPAVYKVFPTSAPLEGGTMLTICGWDFGFKKNNKFDLRKTKVLLGNESCTLTLSESTTNTLKCTVGPAMSEHFNVSVIVSNSRETTQYSAFSYVDPVITSISPRYGPHAGGTLLTLTGKYLNSGNSRHISIGGKTCTLKSVSDSILECYTPGHTVSAEFPVKLKIDLADRVTSSFSYREDPVVSEIHPTKSFISGGSTITGIGKNLNSVSTPKLVIEVHDVGVNYTVACQHRSSSEIICCTTPSLRQLDLQLPLKTKAFFLLDGILSKHFDLTYVHDPMFKPFEKPVMISMGNENVVEIKGDDIDPEAVKGEVLKVGNKSCENLHWHSEALLCTVPSDLLKLNGGELNIEWKQAVSSTVLGKVIVQPDQNFAGLIIGAVSISVVVLLVSGLFLWLRKRKHKDLGSELVRYDARVHTPHLDRLVSARSVSPTTEMVSNESVDYRATFPEDQFPNSSQNGACRQVQYLLTDLSPILTSGDSDISSPLLQNTVHIDLSALNPELVQAVPHVVIGPSSLIVHFNEVIGRGHFGCVYHGTLLDSDGKKIHCAVKSLNRITDIEEVSQFLTEGIIMKDFSHPNVLSLLGICLRSEGSPLVVLPYMKHGDLRNFIRNETHNPTVKDLIGFGLQVAKGMKYLVSKKFVHRDLAARNCMLDEKFTVKVADFGLARDMYDKEYYSVHNKTGAKLPVKWMALESLQTQKFTTKSDVWSFGVLLWELMTRGAPPYPDVNTFDITIYLLQGRRLLQPEYCPDALYEVMLKCWHPKAEMRPSVSELVSRISSIFSTFIGEHYVHVNATYVNVKCVAPYPSLLPSQDNIDGEANT</sequence>
<dbReference type="EC" id="2.7.10.1"/>
<dbReference type="EMBL" id="X96786">
    <property type="protein sequence ID" value="CAA65582.1"/>
    <property type="molecule type" value="mRNA"/>
</dbReference>
<dbReference type="EMBL" id="U65007">
    <property type="protein sequence ID" value="AAB19189.1"/>
    <property type="molecule type" value="mRNA"/>
</dbReference>
<dbReference type="EMBL" id="S69881">
    <property type="protein sequence ID" value="AAB30575.1"/>
    <property type="molecule type" value="mRNA"/>
</dbReference>
<dbReference type="EMBL" id="Z46374">
    <property type="protein sequence ID" value="CAA86508.1"/>
    <property type="molecule type" value="mRNA"/>
</dbReference>
<dbReference type="EMBL" id="AB012281">
    <property type="protein sequence ID" value="BAA28171.1"/>
    <property type="molecule type" value="Genomic_DNA"/>
</dbReference>
<dbReference type="PIR" id="PC2131">
    <property type="entry name" value="PC2131"/>
</dbReference>
<dbReference type="RefSeq" id="NP_113705.1">
    <property type="nucleotide sequence ID" value="NM_031517.2"/>
</dbReference>
<dbReference type="SMR" id="P97523"/>
<dbReference type="FunCoup" id="P97523">
    <property type="interactions" value="600"/>
</dbReference>
<dbReference type="STRING" id="10116.ENSRNOP00000070486"/>
<dbReference type="GlyCosmos" id="P97523">
    <property type="glycosylation" value="10 sites, No reported glycans"/>
</dbReference>
<dbReference type="GlyGen" id="P97523">
    <property type="glycosylation" value="13 sites"/>
</dbReference>
<dbReference type="iPTMnet" id="P97523"/>
<dbReference type="PhosphoSitePlus" id="P97523"/>
<dbReference type="PaxDb" id="10116-ENSRNOP00000009662"/>
<dbReference type="GeneID" id="24553"/>
<dbReference type="KEGG" id="rno:24553"/>
<dbReference type="UCSC" id="RGD:3082">
    <property type="organism name" value="rat"/>
</dbReference>
<dbReference type="AGR" id="RGD:3082"/>
<dbReference type="CTD" id="4233"/>
<dbReference type="RGD" id="3082">
    <property type="gene designation" value="Met"/>
</dbReference>
<dbReference type="eggNOG" id="KOG1095">
    <property type="taxonomic scope" value="Eukaryota"/>
</dbReference>
<dbReference type="eggNOG" id="KOG3610">
    <property type="taxonomic scope" value="Eukaryota"/>
</dbReference>
<dbReference type="InParanoid" id="P97523"/>
<dbReference type="OrthoDB" id="32334at9989"/>
<dbReference type="PhylomeDB" id="P97523"/>
<dbReference type="BRENDA" id="2.7.10.1">
    <property type="organism ID" value="5301"/>
</dbReference>
<dbReference type="Reactome" id="R-RNO-1257604">
    <property type="pathway name" value="PIP3 activates AKT signaling"/>
</dbReference>
<dbReference type="Reactome" id="R-RNO-416550">
    <property type="pathway name" value="Sema4D mediated inhibition of cell attachment and migration"/>
</dbReference>
<dbReference type="Reactome" id="R-RNO-5673001">
    <property type="pathway name" value="RAF/MAP kinase cascade"/>
</dbReference>
<dbReference type="Reactome" id="R-RNO-6806942">
    <property type="pathway name" value="MET Receptor Activation"/>
</dbReference>
<dbReference type="Reactome" id="R-RNO-6807004">
    <property type="pathway name" value="Negative regulation of MET activity"/>
</dbReference>
<dbReference type="Reactome" id="R-RNO-6811558">
    <property type="pathway name" value="PI5P, PP2A and IER3 Regulate PI3K/AKT Signaling"/>
</dbReference>
<dbReference type="Reactome" id="R-RNO-8851805">
    <property type="pathway name" value="MET activates RAS signaling"/>
</dbReference>
<dbReference type="Reactome" id="R-RNO-8851907">
    <property type="pathway name" value="MET activates PI3K/AKT signaling"/>
</dbReference>
<dbReference type="Reactome" id="R-RNO-8865999">
    <property type="pathway name" value="MET activates PTPN11"/>
</dbReference>
<dbReference type="Reactome" id="R-RNO-8874081">
    <property type="pathway name" value="MET activates PTK2 signaling"/>
</dbReference>
<dbReference type="Reactome" id="R-RNO-8875513">
    <property type="pathway name" value="MET interacts with TNS proteins"/>
</dbReference>
<dbReference type="Reactome" id="R-RNO-8875555">
    <property type="pathway name" value="MET activates RAP1 and RAC1"/>
</dbReference>
<dbReference type="Reactome" id="R-RNO-8875656">
    <property type="pathway name" value="MET receptor recycling"/>
</dbReference>
<dbReference type="Reactome" id="R-RNO-8875791">
    <property type="pathway name" value="MET activates STAT3"/>
</dbReference>
<dbReference type="Reactome" id="R-RNO-9734091">
    <property type="pathway name" value="Drug-mediated inhibition of MET activation"/>
</dbReference>
<dbReference type="PRO" id="PR:P97523"/>
<dbReference type="Proteomes" id="UP000002494">
    <property type="component" value="Unplaced"/>
</dbReference>
<dbReference type="GO" id="GO:0009925">
    <property type="term" value="C:basal plasma membrane"/>
    <property type="evidence" value="ECO:0000266"/>
    <property type="project" value="RGD"/>
</dbReference>
<dbReference type="GO" id="GO:0030425">
    <property type="term" value="C:dendrite"/>
    <property type="evidence" value="ECO:0000314"/>
    <property type="project" value="RGD"/>
</dbReference>
<dbReference type="GO" id="GO:0060076">
    <property type="term" value="C:excitatory synapse"/>
    <property type="evidence" value="ECO:0000314"/>
    <property type="project" value="RGD"/>
</dbReference>
<dbReference type="GO" id="GO:0005615">
    <property type="term" value="C:extracellular space"/>
    <property type="evidence" value="ECO:0000314"/>
    <property type="project" value="RGD"/>
</dbReference>
<dbReference type="GO" id="GO:0016020">
    <property type="term" value="C:membrane"/>
    <property type="evidence" value="ECO:0000266"/>
    <property type="project" value="RGD"/>
</dbReference>
<dbReference type="GO" id="GO:0043025">
    <property type="term" value="C:neuronal cell body"/>
    <property type="evidence" value="ECO:0000314"/>
    <property type="project" value="RGD"/>
</dbReference>
<dbReference type="GO" id="GO:0005886">
    <property type="term" value="C:plasma membrane"/>
    <property type="evidence" value="ECO:0000318"/>
    <property type="project" value="GO_Central"/>
</dbReference>
<dbReference type="GO" id="GO:0045211">
    <property type="term" value="C:postsynaptic membrane"/>
    <property type="evidence" value="ECO:0000314"/>
    <property type="project" value="RGD"/>
</dbReference>
<dbReference type="GO" id="GO:0043235">
    <property type="term" value="C:receptor complex"/>
    <property type="evidence" value="ECO:0000318"/>
    <property type="project" value="GO_Central"/>
</dbReference>
<dbReference type="GO" id="GO:0036126">
    <property type="term" value="C:sperm flagellum"/>
    <property type="evidence" value="ECO:0000314"/>
    <property type="project" value="RGD"/>
</dbReference>
<dbReference type="GO" id="GO:0005524">
    <property type="term" value="F:ATP binding"/>
    <property type="evidence" value="ECO:0007669"/>
    <property type="project" value="UniProtKB-KW"/>
</dbReference>
<dbReference type="GO" id="GO:0008013">
    <property type="term" value="F:beta-catenin binding"/>
    <property type="evidence" value="ECO:0000353"/>
    <property type="project" value="RGD"/>
</dbReference>
<dbReference type="GO" id="GO:0005008">
    <property type="term" value="F:hepatocyte growth factor receptor activity"/>
    <property type="evidence" value="ECO:0000315"/>
    <property type="project" value="RGD"/>
</dbReference>
<dbReference type="GO" id="GO:0042802">
    <property type="term" value="F:identical protein binding"/>
    <property type="evidence" value="ECO:0000266"/>
    <property type="project" value="RGD"/>
</dbReference>
<dbReference type="GO" id="GO:0140677">
    <property type="term" value="F:molecular function activator activity"/>
    <property type="evidence" value="ECO:0000266"/>
    <property type="project" value="RGD"/>
</dbReference>
<dbReference type="GO" id="GO:0043548">
    <property type="term" value="F:phosphatidylinositol 3-kinase binding"/>
    <property type="evidence" value="ECO:0000314"/>
    <property type="project" value="RGD"/>
</dbReference>
<dbReference type="GO" id="GO:0043274">
    <property type="term" value="F:phospholipase binding"/>
    <property type="evidence" value="ECO:0000353"/>
    <property type="project" value="RGD"/>
</dbReference>
<dbReference type="GO" id="GO:0004672">
    <property type="term" value="F:protein kinase activity"/>
    <property type="evidence" value="ECO:0000266"/>
    <property type="project" value="RGD"/>
</dbReference>
<dbReference type="GO" id="GO:0019903">
    <property type="term" value="F:protein phosphatase binding"/>
    <property type="evidence" value="ECO:0000266"/>
    <property type="project" value="RGD"/>
</dbReference>
<dbReference type="GO" id="GO:0004713">
    <property type="term" value="F:protein tyrosine kinase activity"/>
    <property type="evidence" value="ECO:0000314"/>
    <property type="project" value="RGD"/>
</dbReference>
<dbReference type="GO" id="GO:0044877">
    <property type="term" value="F:protein-containing complex binding"/>
    <property type="evidence" value="ECO:0000314"/>
    <property type="project" value="RGD"/>
</dbReference>
<dbReference type="GO" id="GO:0017154">
    <property type="term" value="F:semaphorin receptor activity"/>
    <property type="evidence" value="ECO:0007669"/>
    <property type="project" value="InterPro"/>
</dbReference>
<dbReference type="GO" id="GO:0030534">
    <property type="term" value="P:adult behavior"/>
    <property type="evidence" value="ECO:0000266"/>
    <property type="project" value="RGD"/>
</dbReference>
<dbReference type="GO" id="GO:0007420">
    <property type="term" value="P:brain development"/>
    <property type="evidence" value="ECO:0000266"/>
    <property type="project" value="RGD"/>
</dbReference>
<dbReference type="GO" id="GO:0048754">
    <property type="term" value="P:branching morphogenesis of an epithelial tube"/>
    <property type="evidence" value="ECO:0000266"/>
    <property type="project" value="RGD"/>
</dbReference>
<dbReference type="GO" id="GO:0055013">
    <property type="term" value="P:cardiac muscle cell development"/>
    <property type="evidence" value="ECO:0000266"/>
    <property type="project" value="RGD"/>
</dbReference>
<dbReference type="GO" id="GO:0060048">
    <property type="term" value="P:cardiac muscle contraction"/>
    <property type="evidence" value="ECO:0000266"/>
    <property type="project" value="RGD"/>
</dbReference>
<dbReference type="GO" id="GO:0007169">
    <property type="term" value="P:cell surface receptor protein tyrosine kinase signaling pathway"/>
    <property type="evidence" value="ECO:0000318"/>
    <property type="project" value="GO_Central"/>
</dbReference>
<dbReference type="GO" id="GO:0071243">
    <property type="term" value="P:cellular response to arsenic-containing substance"/>
    <property type="evidence" value="ECO:0000270"/>
    <property type="project" value="RGD"/>
</dbReference>
<dbReference type="GO" id="GO:0071333">
    <property type="term" value="P:cellular response to glucose stimulus"/>
    <property type="evidence" value="ECO:0000270"/>
    <property type="project" value="RGD"/>
</dbReference>
<dbReference type="GO" id="GO:0071363">
    <property type="term" value="P:cellular response to growth factor stimulus"/>
    <property type="evidence" value="ECO:0000270"/>
    <property type="project" value="RGD"/>
</dbReference>
<dbReference type="GO" id="GO:0071354">
    <property type="term" value="P:cellular response to interleukin-6"/>
    <property type="evidence" value="ECO:0000270"/>
    <property type="project" value="RGD"/>
</dbReference>
<dbReference type="GO" id="GO:0071375">
    <property type="term" value="P:cellular response to peptide hormone stimulus"/>
    <property type="evidence" value="ECO:0000270"/>
    <property type="project" value="RGD"/>
</dbReference>
<dbReference type="GO" id="GO:0021953">
    <property type="term" value="P:central nervous system neuron differentiation"/>
    <property type="evidence" value="ECO:0000270"/>
    <property type="project" value="RGD"/>
</dbReference>
<dbReference type="GO" id="GO:0007268">
    <property type="term" value="P:chemical synaptic transmission"/>
    <property type="evidence" value="ECO:0000266"/>
    <property type="project" value="RGD"/>
</dbReference>
<dbReference type="GO" id="GO:1904659">
    <property type="term" value="P:D-glucose transmembrane transport"/>
    <property type="evidence" value="ECO:0000266"/>
    <property type="project" value="RGD"/>
</dbReference>
<dbReference type="GO" id="GO:0001886">
    <property type="term" value="P:endothelial cell morphogenesis"/>
    <property type="evidence" value="ECO:0000266"/>
    <property type="project" value="RGD"/>
</dbReference>
<dbReference type="GO" id="GO:0051649">
    <property type="term" value="P:establishment of localization in cell"/>
    <property type="evidence" value="ECO:0000266"/>
    <property type="project" value="RGD"/>
</dbReference>
<dbReference type="GO" id="GO:0061436">
    <property type="term" value="P:establishment of skin barrier"/>
    <property type="evidence" value="ECO:0000266"/>
    <property type="project" value="RGD"/>
</dbReference>
<dbReference type="GO" id="GO:0060079">
    <property type="term" value="P:excitatory postsynaptic potential"/>
    <property type="evidence" value="ECO:0000266"/>
    <property type="project" value="RGD"/>
</dbReference>
<dbReference type="GO" id="GO:0030317">
    <property type="term" value="P:flagellated sperm motility"/>
    <property type="evidence" value="ECO:0000315"/>
    <property type="project" value="RGD"/>
</dbReference>
<dbReference type="GO" id="GO:0042593">
    <property type="term" value="P:glucose homeostasis"/>
    <property type="evidence" value="ECO:0000266"/>
    <property type="project" value="RGD"/>
</dbReference>
<dbReference type="GO" id="GO:0048012">
    <property type="term" value="P:hepatocyte growth factor receptor signaling pathway"/>
    <property type="evidence" value="ECO:0000266"/>
    <property type="project" value="RGD"/>
</dbReference>
<dbReference type="GO" id="GO:0007595">
    <property type="term" value="P:lactation"/>
    <property type="evidence" value="ECO:0000270"/>
    <property type="project" value="RGD"/>
</dbReference>
<dbReference type="GO" id="GO:0001889">
    <property type="term" value="P:liver development"/>
    <property type="evidence" value="ECO:0000270"/>
    <property type="project" value="RGD"/>
</dbReference>
<dbReference type="GO" id="GO:0008584">
    <property type="term" value="P:male gonad development"/>
    <property type="evidence" value="ECO:0000270"/>
    <property type="project" value="RGD"/>
</dbReference>
<dbReference type="GO" id="GO:0050804">
    <property type="term" value="P:modulation of chemical synaptic transmission"/>
    <property type="evidence" value="ECO:0000266"/>
    <property type="project" value="RGD"/>
</dbReference>
<dbReference type="GO" id="GO:0014812">
    <property type="term" value="P:muscle cell migration"/>
    <property type="evidence" value="ECO:0000266"/>
    <property type="project" value="RGD"/>
</dbReference>
<dbReference type="GO" id="GO:0007517">
    <property type="term" value="P:muscle organ development"/>
    <property type="evidence" value="ECO:0000266"/>
    <property type="project" value="RGD"/>
</dbReference>
<dbReference type="GO" id="GO:0051450">
    <property type="term" value="P:myoblast proliferation"/>
    <property type="evidence" value="ECO:0000266"/>
    <property type="project" value="RGD"/>
</dbReference>
<dbReference type="GO" id="GO:0014902">
    <property type="term" value="P:myotube differentiation"/>
    <property type="evidence" value="ECO:0000266"/>
    <property type="project" value="RGD"/>
</dbReference>
<dbReference type="GO" id="GO:0010629">
    <property type="term" value="P:negative regulation of gene expression"/>
    <property type="evidence" value="ECO:0000266"/>
    <property type="project" value="RGD"/>
</dbReference>
<dbReference type="GO" id="GO:1901299">
    <property type="term" value="P:negative regulation of hydrogen peroxide-mediated programmed cell death"/>
    <property type="evidence" value="ECO:0000266"/>
    <property type="project" value="RGD"/>
</dbReference>
<dbReference type="GO" id="GO:0035024">
    <property type="term" value="P:negative regulation of Rho protein signal transduction"/>
    <property type="evidence" value="ECO:0000266"/>
    <property type="project" value="RGD"/>
</dbReference>
<dbReference type="GO" id="GO:0051497">
    <property type="term" value="P:negative regulation of stress fiber assembly"/>
    <property type="evidence" value="ECO:0000266"/>
    <property type="project" value="RGD"/>
</dbReference>
<dbReference type="GO" id="GO:0070495">
    <property type="term" value="P:negative regulation of thrombin-activated receptor signaling pathway"/>
    <property type="evidence" value="ECO:0000266"/>
    <property type="project" value="RGD"/>
</dbReference>
<dbReference type="GO" id="GO:0000122">
    <property type="term" value="P:negative regulation of transcription by RNA polymerase II"/>
    <property type="evidence" value="ECO:0000315"/>
    <property type="project" value="RGD"/>
</dbReference>
<dbReference type="GO" id="GO:0071635">
    <property type="term" value="P:negative regulation of transforming growth factor beta production"/>
    <property type="evidence" value="ECO:0000266"/>
    <property type="project" value="RGD"/>
</dbReference>
<dbReference type="GO" id="GO:0030182">
    <property type="term" value="P:neuron differentiation"/>
    <property type="evidence" value="ECO:0000318"/>
    <property type="project" value="GO_Central"/>
</dbReference>
<dbReference type="GO" id="GO:0001764">
    <property type="term" value="P:neuron migration"/>
    <property type="evidence" value="ECO:0000314"/>
    <property type="project" value="RGD"/>
</dbReference>
<dbReference type="GO" id="GO:0014003">
    <property type="term" value="P:oligodendrocyte development"/>
    <property type="evidence" value="ECO:0000270"/>
    <property type="project" value="RGD"/>
</dbReference>
<dbReference type="GO" id="GO:0031016">
    <property type="term" value="P:pancreas development"/>
    <property type="evidence" value="ECO:0000270"/>
    <property type="project" value="RGD"/>
</dbReference>
<dbReference type="GO" id="GO:0001890">
    <property type="term" value="P:placenta development"/>
    <property type="evidence" value="ECO:0000266"/>
    <property type="project" value="RGD"/>
</dbReference>
<dbReference type="GO" id="GO:0050918">
    <property type="term" value="P:positive chemotaxis"/>
    <property type="evidence" value="ECO:0000250"/>
    <property type="project" value="UniProtKB"/>
</dbReference>
<dbReference type="GO" id="GO:0010828">
    <property type="term" value="P:positive regulation of D-glucose transmembrane transport"/>
    <property type="evidence" value="ECO:0000266"/>
    <property type="project" value="RGD"/>
</dbReference>
<dbReference type="GO" id="GO:0050775">
    <property type="term" value="P:positive regulation of dendrite morphogenesis"/>
    <property type="evidence" value="ECO:0000315"/>
    <property type="project" value="RGD"/>
</dbReference>
<dbReference type="GO" id="GO:0045740">
    <property type="term" value="P:positive regulation of DNA replication"/>
    <property type="evidence" value="ECO:0000315"/>
    <property type="project" value="RGD"/>
</dbReference>
<dbReference type="GO" id="GO:2001028">
    <property type="term" value="P:positive regulation of endothelial cell chemotaxis"/>
    <property type="evidence" value="ECO:0000250"/>
    <property type="project" value="UniProtKB"/>
</dbReference>
<dbReference type="GO" id="GO:0010628">
    <property type="term" value="P:positive regulation of gene expression"/>
    <property type="evidence" value="ECO:0000315"/>
    <property type="project" value="RGD"/>
</dbReference>
<dbReference type="GO" id="GO:0043410">
    <property type="term" value="P:positive regulation of MAPK cascade"/>
    <property type="evidence" value="ECO:0000266"/>
    <property type="project" value="RGD"/>
</dbReference>
<dbReference type="GO" id="GO:0031116">
    <property type="term" value="P:positive regulation of microtubule polymerization"/>
    <property type="evidence" value="ECO:0000266"/>
    <property type="project" value="RGD"/>
</dbReference>
<dbReference type="GO" id="GO:0045840">
    <property type="term" value="P:positive regulation of mitotic nuclear division"/>
    <property type="evidence" value="ECO:0000315"/>
    <property type="project" value="RGD"/>
</dbReference>
<dbReference type="GO" id="GO:0010976">
    <property type="term" value="P:positive regulation of neuron projection development"/>
    <property type="evidence" value="ECO:0000315"/>
    <property type="project" value="RGD"/>
</dbReference>
<dbReference type="GO" id="GO:1900745">
    <property type="term" value="P:positive regulation of p38MAPK cascade"/>
    <property type="evidence" value="ECO:0000266"/>
    <property type="project" value="RGD"/>
</dbReference>
<dbReference type="GO" id="GO:0045944">
    <property type="term" value="P:positive regulation of transcription by RNA polymerase II"/>
    <property type="evidence" value="ECO:0000315"/>
    <property type="project" value="RGD"/>
</dbReference>
<dbReference type="GO" id="GO:0072593">
    <property type="term" value="P:reactive oxygen species metabolic process"/>
    <property type="evidence" value="ECO:0000266"/>
    <property type="project" value="RGD"/>
</dbReference>
<dbReference type="GO" id="GO:0060665">
    <property type="term" value="P:regulation of branching involved in salivary gland morphogenesis by mesenchymal-epithelial signaling"/>
    <property type="evidence" value="ECO:0000266"/>
    <property type="project" value="RGD"/>
</dbReference>
<dbReference type="GO" id="GO:1900407">
    <property type="term" value="P:regulation of cellular response to oxidative stress"/>
    <property type="evidence" value="ECO:0000266"/>
    <property type="project" value="RGD"/>
</dbReference>
<dbReference type="GO" id="GO:0032675">
    <property type="term" value="P:regulation of interleukin-6 production"/>
    <property type="evidence" value="ECO:0000266"/>
    <property type="project" value="RGD"/>
</dbReference>
<dbReference type="GO" id="GO:0010447">
    <property type="term" value="P:response to acidic pH"/>
    <property type="evidence" value="ECO:0000270"/>
    <property type="project" value="RGD"/>
</dbReference>
<dbReference type="GO" id="GO:0043434">
    <property type="term" value="P:response to peptide hormone"/>
    <property type="evidence" value="ECO:0000270"/>
    <property type="project" value="RGD"/>
</dbReference>
<dbReference type="GO" id="GO:0009410">
    <property type="term" value="P:response to xenobiotic stimulus"/>
    <property type="evidence" value="ECO:0000270"/>
    <property type="project" value="RGD"/>
</dbReference>
<dbReference type="GO" id="GO:0071526">
    <property type="term" value="P:semaphorin-plexin signaling pathway"/>
    <property type="evidence" value="ECO:0000250"/>
    <property type="project" value="UniProtKB"/>
</dbReference>
<dbReference type="GO" id="GO:0007519">
    <property type="term" value="P:skeletal muscle tissue development"/>
    <property type="evidence" value="ECO:0000266"/>
    <property type="project" value="RGD"/>
</dbReference>
<dbReference type="CDD" id="cd00603">
    <property type="entry name" value="IPT_PCSR"/>
    <property type="match status" value="1"/>
</dbReference>
<dbReference type="CDD" id="cd01180">
    <property type="entry name" value="IPT_plexin_repeat1"/>
    <property type="match status" value="1"/>
</dbReference>
<dbReference type="CDD" id="cd01179">
    <property type="entry name" value="IPT_plexin_repeat2"/>
    <property type="match status" value="1"/>
</dbReference>
<dbReference type="CDD" id="cd05058">
    <property type="entry name" value="PTKc_Met_Ron"/>
    <property type="match status" value="1"/>
</dbReference>
<dbReference type="FunFam" id="1.10.510.10:FF:000093">
    <property type="entry name" value="Hepatocyte growth factor receptor"/>
    <property type="match status" value="1"/>
</dbReference>
<dbReference type="FunFam" id="2.130.10.10:FF:000088">
    <property type="entry name" value="Hepatocyte growth factor receptor"/>
    <property type="match status" value="1"/>
</dbReference>
<dbReference type="FunFam" id="2.60.40.10:FF:000213">
    <property type="entry name" value="Hepatocyte growth factor receptor"/>
    <property type="match status" value="1"/>
</dbReference>
<dbReference type="FunFam" id="2.60.40.10:FF:000400">
    <property type="entry name" value="Hepatocyte growth factor receptor"/>
    <property type="match status" value="1"/>
</dbReference>
<dbReference type="FunFam" id="2.60.40.10:FF:002708">
    <property type="entry name" value="Hepatocyte growth factor receptor"/>
    <property type="match status" value="1"/>
</dbReference>
<dbReference type="FunFam" id="3.30.200.20:FF:000188">
    <property type="entry name" value="Hepatocyte growth factor receptor"/>
    <property type="match status" value="1"/>
</dbReference>
<dbReference type="FunFam" id="3.30.1680.10:FF:000006">
    <property type="entry name" value="Macrophage-stimulating 1 receptor b"/>
    <property type="match status" value="1"/>
</dbReference>
<dbReference type="Gene3D" id="2.60.40.10">
    <property type="entry name" value="Immunoglobulins"/>
    <property type="match status" value="3"/>
</dbReference>
<dbReference type="Gene3D" id="3.30.200.20">
    <property type="entry name" value="Phosphorylase Kinase, domain 1"/>
    <property type="match status" value="1"/>
</dbReference>
<dbReference type="Gene3D" id="1.10.510.10">
    <property type="entry name" value="Transferase(Phosphotransferase) domain 1"/>
    <property type="match status" value="1"/>
</dbReference>
<dbReference type="Gene3D" id="2.130.10.10">
    <property type="entry name" value="YVTN repeat-like/Quinoprotein amine dehydrogenase"/>
    <property type="match status" value="1"/>
</dbReference>
<dbReference type="InterPro" id="IPR013783">
    <property type="entry name" value="Ig-like_fold"/>
</dbReference>
<dbReference type="InterPro" id="IPR014756">
    <property type="entry name" value="Ig_E-set"/>
</dbReference>
<dbReference type="InterPro" id="IPR002909">
    <property type="entry name" value="IPT_dom"/>
</dbReference>
<dbReference type="InterPro" id="IPR011009">
    <property type="entry name" value="Kinase-like_dom_sf"/>
</dbReference>
<dbReference type="InterPro" id="IPR031148">
    <property type="entry name" value="Plexin"/>
</dbReference>
<dbReference type="InterPro" id="IPR002165">
    <property type="entry name" value="Plexin_repeat"/>
</dbReference>
<dbReference type="InterPro" id="IPR000719">
    <property type="entry name" value="Prot_kinase_dom"/>
</dbReference>
<dbReference type="InterPro" id="IPR017441">
    <property type="entry name" value="Protein_kinase_ATP_BS"/>
</dbReference>
<dbReference type="InterPro" id="IPR016201">
    <property type="entry name" value="PSI"/>
</dbReference>
<dbReference type="InterPro" id="IPR001627">
    <property type="entry name" value="Semap_dom"/>
</dbReference>
<dbReference type="InterPro" id="IPR036352">
    <property type="entry name" value="Semap_dom_sf"/>
</dbReference>
<dbReference type="InterPro" id="IPR001245">
    <property type="entry name" value="Ser-Thr/Tyr_kinase_cat_dom"/>
</dbReference>
<dbReference type="InterPro" id="IPR008266">
    <property type="entry name" value="Tyr_kinase_AS"/>
</dbReference>
<dbReference type="InterPro" id="IPR020635">
    <property type="entry name" value="Tyr_kinase_cat_dom"/>
</dbReference>
<dbReference type="InterPro" id="IPR016244">
    <property type="entry name" value="Tyr_kinase_HGF/MSP_rcpt"/>
</dbReference>
<dbReference type="InterPro" id="IPR015943">
    <property type="entry name" value="WD40/YVTN_repeat-like_dom_sf"/>
</dbReference>
<dbReference type="PANTHER" id="PTHR22625:SF61">
    <property type="entry name" value="HEPATOCYTE GROWTH FACTOR RECEPTOR"/>
    <property type="match status" value="1"/>
</dbReference>
<dbReference type="PANTHER" id="PTHR22625">
    <property type="entry name" value="PLEXIN"/>
    <property type="match status" value="1"/>
</dbReference>
<dbReference type="Pfam" id="PF07714">
    <property type="entry name" value="PK_Tyr_Ser-Thr"/>
    <property type="match status" value="1"/>
</dbReference>
<dbReference type="Pfam" id="PF01437">
    <property type="entry name" value="PSI"/>
    <property type="match status" value="1"/>
</dbReference>
<dbReference type="Pfam" id="PF01403">
    <property type="entry name" value="Sema"/>
    <property type="match status" value="1"/>
</dbReference>
<dbReference type="Pfam" id="PF01833">
    <property type="entry name" value="TIG"/>
    <property type="match status" value="3"/>
</dbReference>
<dbReference type="PIRSF" id="PIRSF000617">
    <property type="entry name" value="TyrPK_HGF-R"/>
    <property type="match status" value="1"/>
</dbReference>
<dbReference type="PRINTS" id="PR00109">
    <property type="entry name" value="TYRKINASE"/>
</dbReference>
<dbReference type="SMART" id="SM00429">
    <property type="entry name" value="IPT"/>
    <property type="match status" value="4"/>
</dbReference>
<dbReference type="SMART" id="SM00423">
    <property type="entry name" value="PSI"/>
    <property type="match status" value="1"/>
</dbReference>
<dbReference type="SMART" id="SM00630">
    <property type="entry name" value="Sema"/>
    <property type="match status" value="1"/>
</dbReference>
<dbReference type="SMART" id="SM00219">
    <property type="entry name" value="TyrKc"/>
    <property type="match status" value="1"/>
</dbReference>
<dbReference type="SUPFAM" id="SSF81296">
    <property type="entry name" value="E set domains"/>
    <property type="match status" value="3"/>
</dbReference>
<dbReference type="SUPFAM" id="SSF103575">
    <property type="entry name" value="Plexin repeat"/>
    <property type="match status" value="1"/>
</dbReference>
<dbReference type="SUPFAM" id="SSF56112">
    <property type="entry name" value="Protein kinase-like (PK-like)"/>
    <property type="match status" value="1"/>
</dbReference>
<dbReference type="SUPFAM" id="SSF101912">
    <property type="entry name" value="Sema domain"/>
    <property type="match status" value="1"/>
</dbReference>
<dbReference type="PROSITE" id="PS00107">
    <property type="entry name" value="PROTEIN_KINASE_ATP"/>
    <property type="match status" value="1"/>
</dbReference>
<dbReference type="PROSITE" id="PS50011">
    <property type="entry name" value="PROTEIN_KINASE_DOM"/>
    <property type="match status" value="1"/>
</dbReference>
<dbReference type="PROSITE" id="PS00109">
    <property type="entry name" value="PROTEIN_KINASE_TYR"/>
    <property type="match status" value="1"/>
</dbReference>
<dbReference type="PROSITE" id="PS51004">
    <property type="entry name" value="SEMA"/>
    <property type="match status" value="1"/>
</dbReference>
<name>MET_RAT</name>
<feature type="signal peptide" evidence="4">
    <location>
        <begin position="1"/>
        <end position="24"/>
    </location>
</feature>
<feature type="chain" id="PRO_0000024442" description="Hepatocyte growth factor receptor">
    <location>
        <begin position="25"/>
        <end position="1382"/>
    </location>
</feature>
<feature type="topological domain" description="Extracellular" evidence="4">
    <location>
        <begin position="25"/>
        <end position="935"/>
    </location>
</feature>
<feature type="transmembrane region" description="Helical" evidence="4">
    <location>
        <begin position="936"/>
        <end position="956"/>
    </location>
</feature>
<feature type="topological domain" description="Cytoplasmic" evidence="4">
    <location>
        <begin position="957"/>
        <end position="1379"/>
    </location>
</feature>
<feature type="domain" description="Sema" evidence="6">
    <location>
        <begin position="27"/>
        <end position="516"/>
    </location>
</feature>
<feature type="domain" description="IPT/TIG 1">
    <location>
        <begin position="564"/>
        <end position="656"/>
    </location>
</feature>
<feature type="domain" description="IPT/TIG 2">
    <location>
        <begin position="658"/>
        <end position="740"/>
    </location>
</feature>
<feature type="domain" description="IPT/TIG 3">
    <location>
        <begin position="743"/>
        <end position="837"/>
    </location>
</feature>
<feature type="domain" description="Protein kinase" evidence="5">
    <location>
        <begin position="1079"/>
        <end position="1346"/>
    </location>
</feature>
<feature type="region of interest" description="Interaction with RANBP9" evidence="1">
    <location>
        <begin position="1213"/>
        <end position="1382"/>
    </location>
</feature>
<feature type="region of interest" description="Interaction with MUC20" evidence="1">
    <location>
        <begin position="1321"/>
        <end position="1360"/>
    </location>
</feature>
<feature type="active site" description="Proton acceptor" evidence="5 7">
    <location>
        <position position="1205"/>
    </location>
</feature>
<feature type="binding site" evidence="5">
    <location>
        <begin position="1085"/>
        <end position="1093"/>
    </location>
    <ligand>
        <name>ATP</name>
        <dbReference type="ChEBI" id="CHEBI:30616"/>
    </ligand>
</feature>
<feature type="binding site" evidence="5">
    <location>
        <position position="1111"/>
    </location>
    <ligand>
        <name>ATP</name>
        <dbReference type="ChEBI" id="CHEBI:30616"/>
    </ligand>
</feature>
<feature type="site" description="Cleavage" evidence="4">
    <location>
        <begin position="308"/>
        <end position="309"/>
    </location>
</feature>
<feature type="modified residue" description="Phosphoserine" evidence="2">
    <location>
        <position position="967"/>
    </location>
</feature>
<feature type="modified residue" description="Phosphothreonine" evidence="2">
    <location>
        <position position="978"/>
    </location>
</feature>
<feature type="modified residue" description="Phosphoserine" evidence="2">
    <location>
        <position position="991"/>
    </location>
</feature>
<feature type="modified residue" description="Phosphoserine" evidence="2">
    <location>
        <position position="998"/>
    </location>
</feature>
<feature type="modified residue" description="Phosphoserine" evidence="2">
    <location>
        <position position="1001"/>
    </location>
</feature>
<feature type="modified residue" description="Phosphotyrosine" evidence="2">
    <location>
        <position position="1004"/>
    </location>
</feature>
<feature type="modified residue" description="Phosphotyrosine" evidence="2">
    <location>
        <position position="1231"/>
    </location>
</feature>
<feature type="modified residue" description="Phosphotyrosine; by autocatalysis" evidence="2">
    <location>
        <position position="1235"/>
    </location>
</feature>
<feature type="modified residue" description="Phosphotyrosine; by autocatalysis" evidence="2">
    <location>
        <position position="1236"/>
    </location>
</feature>
<feature type="modified residue" description="Phosphothreonine" evidence="2">
    <location>
        <position position="1290"/>
    </location>
</feature>
<feature type="modified residue" description="Phosphotyrosine; by autocatalysis" evidence="2">
    <location>
        <position position="1350"/>
    </location>
</feature>
<feature type="modified residue" description="Phosphotyrosine; by autocatalysis" evidence="2">
    <location>
        <position position="1357"/>
    </location>
</feature>
<feature type="modified residue" description="Phosphotyrosine" evidence="2">
    <location>
        <position position="1366"/>
    </location>
</feature>
<feature type="glycosylation site" description="N-linked (GlcNAc...) asparagine" evidence="4">
    <location>
        <position position="45"/>
    </location>
</feature>
<feature type="glycosylation site" description="N-linked (GlcNAc...) asparagine" evidence="4">
    <location>
        <position position="106"/>
    </location>
</feature>
<feature type="glycosylation site" description="N-linked (GlcNAc...) asparagine" evidence="4">
    <location>
        <position position="203"/>
    </location>
</feature>
<feature type="glycosylation site" description="N-linked (GlcNAc...) asparagine" evidence="4">
    <location>
        <position position="359"/>
    </location>
</feature>
<feature type="glycosylation site" description="N-linked (GlcNAc...) asparagine" evidence="4">
    <location>
        <position position="400"/>
    </location>
</feature>
<feature type="glycosylation site" description="N-linked (GlcNAc...) asparagine" evidence="4">
    <location>
        <position position="406"/>
    </location>
</feature>
<feature type="glycosylation site" description="O-linked (Man) threonine" evidence="2">
    <location>
        <position position="583"/>
    </location>
</feature>
<feature type="glycosylation site" description="N-linked (GlcNAc...) asparagine" evidence="4">
    <location>
        <position position="608"/>
    </location>
</feature>
<feature type="glycosylation site" description="N-linked (GlcNAc...) asparagine" evidence="4">
    <location>
        <position position="636"/>
    </location>
</feature>
<feature type="glycosylation site" description="O-linked (Man) threonine" evidence="2">
    <location>
        <position position="677"/>
    </location>
</feature>
<feature type="glycosylation site" description="O-linked (Man) threonine" evidence="2">
    <location>
        <position position="762"/>
    </location>
</feature>
<feature type="glycosylation site" description="N-linked (GlcNAc...) asparagine" evidence="4">
    <location>
        <position position="786"/>
    </location>
</feature>
<feature type="glycosylation site" description="N-linked (GlcNAc...) asparagine" evidence="4">
    <location>
        <position position="880"/>
    </location>
</feature>
<feature type="disulfide bond" evidence="6">
    <location>
        <begin position="95"/>
        <end position="101"/>
    </location>
</feature>
<feature type="disulfide bond" evidence="6">
    <location>
        <begin position="98"/>
        <end position="160"/>
    </location>
</feature>
<feature type="disulfide bond" evidence="6">
    <location>
        <begin position="133"/>
        <end position="141"/>
    </location>
</feature>
<feature type="disulfide bond" evidence="6">
    <location>
        <begin position="173"/>
        <end position="176"/>
    </location>
</feature>
<feature type="disulfide bond" evidence="6">
    <location>
        <begin position="299"/>
        <end position="364"/>
    </location>
</feature>
<feature type="disulfide bond" evidence="6">
    <location>
        <begin position="386"/>
        <end position="398"/>
    </location>
</feature>
<feature type="disulfide bond" evidence="6">
    <location>
        <begin position="521"/>
        <end position="539"/>
    </location>
</feature>
<feature type="disulfide bond" evidence="6">
    <location>
        <begin position="527"/>
        <end position="562"/>
    </location>
</feature>
<feature type="disulfide bond" evidence="6">
    <location>
        <begin position="530"/>
        <end position="546"/>
    </location>
</feature>
<feature type="disulfide bond" evidence="6">
    <location>
        <begin position="542"/>
        <end position="552"/>
    </location>
</feature>
<feature type="sequence conflict" description="In Ref. 2; AAB19189." evidence="8" ref="2">
    <original>H</original>
    <variation>Q</variation>
    <location>
        <position position="53"/>
    </location>
</feature>
<feature type="sequence conflict" description="In Ref. 2; AAB19189." evidence="8" ref="2">
    <original>P</original>
    <variation>H</variation>
    <location>
        <position position="58"/>
    </location>
</feature>
<feature type="sequence conflict" description="In Ref. 2; AAB19189." evidence="8" ref="2">
    <original>P</original>
    <variation>G</variation>
    <location>
        <position position="240"/>
    </location>
</feature>
<feature type="sequence conflict" description="In Ref. 2; AAB19189." evidence="8" ref="2">
    <original>R</original>
    <variation>A</variation>
    <location>
        <position position="427"/>
    </location>
</feature>
<feature type="sequence conflict" description="In Ref. 2; AAB19189." evidence="8" ref="2">
    <original>Y</original>
    <variation>H</variation>
    <location>
        <position position="485"/>
    </location>
</feature>
<feature type="sequence conflict" description="In Ref. 3." evidence="8" ref="3">
    <original>EVIVEH</original>
    <variation>GAAGIR</variation>
    <location>
        <begin position="490"/>
        <end position="495"/>
    </location>
</feature>
<feature type="sequence conflict" description="In Ref. 2; AAB19189." evidence="8" ref="2">
    <original>P</original>
    <variation>A</variation>
    <location>
        <position position="533"/>
    </location>
</feature>
<feature type="sequence conflict" description="In Ref. 2; AAB19189." evidence="8" ref="2">
    <original>R</original>
    <variation>G</variation>
    <location>
        <position position="740"/>
    </location>
</feature>
<feature type="sequence conflict" description="In Ref. 2; AAB19189." evidence="8" ref="2">
    <original>V</original>
    <variation>F</variation>
    <location>
        <position position="744"/>
    </location>
</feature>
<feature type="sequence conflict" description="In Ref. 2; AAB19189." evidence="8" ref="2">
    <original>R</original>
    <variation>Q</variation>
    <location>
        <position position="808"/>
    </location>
</feature>
<feature type="sequence conflict" description="In Ref. 4; CAA86508." evidence="8" ref="4">
    <original>SEAL</original>
    <variation>TASV</variation>
    <location>
        <begin position="890"/>
        <end position="893"/>
    </location>
</feature>
<feature type="sequence conflict" description="In Ref. 4; CAA86508." evidence="8" ref="4">
    <location>
        <position position="907"/>
    </location>
</feature>
<feature type="sequence conflict" description="In Ref. 4; CAA86508." evidence="8" ref="4">
    <original>K</original>
    <variation>E</variation>
    <location>
        <position position="924"/>
    </location>
</feature>
<feature type="sequence conflict" description="In Ref. 4; CAA86508." evidence="8" ref="4">
    <original>A</original>
    <variation>R</variation>
    <location>
        <position position="934"/>
    </location>
</feature>
<feature type="sequence conflict" description="In Ref. 2; AAB19189." evidence="8" ref="2">
    <original>L</original>
    <variation>P</variation>
    <location>
        <position position="1028"/>
    </location>
</feature>
<feature type="sequence conflict" description="In Ref. 2; AAB19189." evidence="8" ref="2">
    <original>P</original>
    <variation>Q</variation>
    <location>
        <position position="1068"/>
    </location>
</feature>
<feature type="sequence conflict" description="In Ref. 2 and 5." evidence="8" ref="2 5">
    <original>V</original>
    <variation>A</variation>
    <location>
        <position position="1197"/>
    </location>
</feature>
<feature type="sequence conflict" description="In Ref. 2; AAB19189." evidence="8" ref="2">
    <original>V</original>
    <variation>F</variation>
    <location>
        <position position="1331"/>
    </location>
</feature>
<organism>
    <name type="scientific">Rattus norvegicus</name>
    <name type="common">Rat</name>
    <dbReference type="NCBI Taxonomy" id="10116"/>
    <lineage>
        <taxon>Eukaryota</taxon>
        <taxon>Metazoa</taxon>
        <taxon>Chordata</taxon>
        <taxon>Craniata</taxon>
        <taxon>Vertebrata</taxon>
        <taxon>Euteleostomi</taxon>
        <taxon>Mammalia</taxon>
        <taxon>Eutheria</taxon>
        <taxon>Euarchontoglires</taxon>
        <taxon>Glires</taxon>
        <taxon>Rodentia</taxon>
        <taxon>Myomorpha</taxon>
        <taxon>Muroidea</taxon>
        <taxon>Muridae</taxon>
        <taxon>Murinae</taxon>
        <taxon>Rattus</taxon>
    </lineage>
</organism>
<evidence type="ECO:0000250" key="1"/>
<evidence type="ECO:0000250" key="2">
    <source>
        <dbReference type="UniProtKB" id="P08581"/>
    </source>
</evidence>
<evidence type="ECO:0000250" key="3">
    <source>
        <dbReference type="UniProtKB" id="P16056"/>
    </source>
</evidence>
<evidence type="ECO:0000255" key="4"/>
<evidence type="ECO:0000255" key="5">
    <source>
        <dbReference type="PROSITE-ProRule" id="PRU00159"/>
    </source>
</evidence>
<evidence type="ECO:0000255" key="6">
    <source>
        <dbReference type="PROSITE-ProRule" id="PRU00352"/>
    </source>
</evidence>
<evidence type="ECO:0000255" key="7">
    <source>
        <dbReference type="PROSITE-ProRule" id="PRU10028"/>
    </source>
</evidence>
<evidence type="ECO:0000305" key="8"/>
<protein>
    <recommendedName>
        <fullName>Hepatocyte growth factor receptor</fullName>
        <shortName>HGF receptor</shortName>
        <ecNumber>2.7.10.1</ecNumber>
    </recommendedName>
    <alternativeName>
        <fullName>HGF/SF receptor</fullName>
    </alternativeName>
    <alternativeName>
        <fullName>Proto-oncogene c-Met</fullName>
    </alternativeName>
    <alternativeName>
        <fullName>Scatter factor receptor</fullName>
        <shortName>SF receptor</shortName>
    </alternativeName>
    <alternativeName>
        <fullName>Tyrosine-protein kinase Met</fullName>
    </alternativeName>
</protein>
<gene>
    <name type="primary">Met</name>
</gene>